<name>SUCC_HAHCH</name>
<organism>
    <name type="scientific">Hahella chejuensis (strain KCTC 2396)</name>
    <dbReference type="NCBI Taxonomy" id="349521"/>
    <lineage>
        <taxon>Bacteria</taxon>
        <taxon>Pseudomonadati</taxon>
        <taxon>Pseudomonadota</taxon>
        <taxon>Gammaproteobacteria</taxon>
        <taxon>Oceanospirillales</taxon>
        <taxon>Hahellaceae</taxon>
        <taxon>Hahella</taxon>
    </lineage>
</organism>
<gene>
    <name evidence="1" type="primary">sucC</name>
    <name type="ordered locus">HCH_04741</name>
</gene>
<dbReference type="EC" id="6.2.1.5" evidence="1"/>
<dbReference type="EMBL" id="CP000155">
    <property type="protein sequence ID" value="ABC31439.1"/>
    <property type="molecule type" value="Genomic_DNA"/>
</dbReference>
<dbReference type="RefSeq" id="WP_011398504.1">
    <property type="nucleotide sequence ID" value="NC_007645.1"/>
</dbReference>
<dbReference type="SMR" id="Q2SD35"/>
<dbReference type="STRING" id="349521.HCH_04741"/>
<dbReference type="KEGG" id="hch:HCH_04741"/>
<dbReference type="eggNOG" id="COG0045">
    <property type="taxonomic scope" value="Bacteria"/>
</dbReference>
<dbReference type="HOGENOM" id="CLU_037430_0_2_6"/>
<dbReference type="OrthoDB" id="9802602at2"/>
<dbReference type="UniPathway" id="UPA00223">
    <property type="reaction ID" value="UER00999"/>
</dbReference>
<dbReference type="Proteomes" id="UP000000238">
    <property type="component" value="Chromosome"/>
</dbReference>
<dbReference type="GO" id="GO:0005829">
    <property type="term" value="C:cytosol"/>
    <property type="evidence" value="ECO:0007669"/>
    <property type="project" value="TreeGrafter"/>
</dbReference>
<dbReference type="GO" id="GO:0042709">
    <property type="term" value="C:succinate-CoA ligase complex"/>
    <property type="evidence" value="ECO:0007669"/>
    <property type="project" value="TreeGrafter"/>
</dbReference>
<dbReference type="GO" id="GO:0005524">
    <property type="term" value="F:ATP binding"/>
    <property type="evidence" value="ECO:0007669"/>
    <property type="project" value="UniProtKB-UniRule"/>
</dbReference>
<dbReference type="GO" id="GO:0000287">
    <property type="term" value="F:magnesium ion binding"/>
    <property type="evidence" value="ECO:0007669"/>
    <property type="project" value="UniProtKB-UniRule"/>
</dbReference>
<dbReference type="GO" id="GO:0004775">
    <property type="term" value="F:succinate-CoA ligase (ADP-forming) activity"/>
    <property type="evidence" value="ECO:0007669"/>
    <property type="project" value="UniProtKB-UniRule"/>
</dbReference>
<dbReference type="GO" id="GO:0004776">
    <property type="term" value="F:succinate-CoA ligase (GDP-forming) activity"/>
    <property type="evidence" value="ECO:0007669"/>
    <property type="project" value="RHEA"/>
</dbReference>
<dbReference type="GO" id="GO:0006104">
    <property type="term" value="P:succinyl-CoA metabolic process"/>
    <property type="evidence" value="ECO:0007669"/>
    <property type="project" value="TreeGrafter"/>
</dbReference>
<dbReference type="GO" id="GO:0006099">
    <property type="term" value="P:tricarboxylic acid cycle"/>
    <property type="evidence" value="ECO:0007669"/>
    <property type="project" value="UniProtKB-UniRule"/>
</dbReference>
<dbReference type="FunFam" id="3.30.1490.20:FF:000002">
    <property type="entry name" value="Succinate--CoA ligase [ADP-forming] subunit beta"/>
    <property type="match status" value="1"/>
</dbReference>
<dbReference type="FunFam" id="3.30.470.20:FF:000002">
    <property type="entry name" value="Succinate--CoA ligase [ADP-forming] subunit beta"/>
    <property type="match status" value="1"/>
</dbReference>
<dbReference type="FunFam" id="3.40.50.261:FF:000001">
    <property type="entry name" value="Succinate--CoA ligase [ADP-forming] subunit beta"/>
    <property type="match status" value="1"/>
</dbReference>
<dbReference type="Gene3D" id="3.30.1490.20">
    <property type="entry name" value="ATP-grasp fold, A domain"/>
    <property type="match status" value="1"/>
</dbReference>
<dbReference type="Gene3D" id="3.30.470.20">
    <property type="entry name" value="ATP-grasp fold, B domain"/>
    <property type="match status" value="1"/>
</dbReference>
<dbReference type="Gene3D" id="3.40.50.261">
    <property type="entry name" value="Succinyl-CoA synthetase domains"/>
    <property type="match status" value="1"/>
</dbReference>
<dbReference type="HAMAP" id="MF_00558">
    <property type="entry name" value="Succ_CoA_beta"/>
    <property type="match status" value="1"/>
</dbReference>
<dbReference type="InterPro" id="IPR011761">
    <property type="entry name" value="ATP-grasp"/>
</dbReference>
<dbReference type="InterPro" id="IPR013650">
    <property type="entry name" value="ATP-grasp_succ-CoA_synth-type"/>
</dbReference>
<dbReference type="InterPro" id="IPR013815">
    <property type="entry name" value="ATP_grasp_subdomain_1"/>
</dbReference>
<dbReference type="InterPro" id="IPR017866">
    <property type="entry name" value="Succ-CoA_synthase_bsu_CS"/>
</dbReference>
<dbReference type="InterPro" id="IPR005811">
    <property type="entry name" value="SUCC_ACL_C"/>
</dbReference>
<dbReference type="InterPro" id="IPR005809">
    <property type="entry name" value="Succ_CoA_ligase-like_bsu"/>
</dbReference>
<dbReference type="InterPro" id="IPR016102">
    <property type="entry name" value="Succinyl-CoA_synth-like"/>
</dbReference>
<dbReference type="NCBIfam" id="NF001913">
    <property type="entry name" value="PRK00696.1"/>
    <property type="match status" value="1"/>
</dbReference>
<dbReference type="NCBIfam" id="TIGR01016">
    <property type="entry name" value="sucCoAbeta"/>
    <property type="match status" value="1"/>
</dbReference>
<dbReference type="PANTHER" id="PTHR11815:SF10">
    <property type="entry name" value="SUCCINATE--COA LIGASE [GDP-FORMING] SUBUNIT BETA, MITOCHONDRIAL"/>
    <property type="match status" value="1"/>
</dbReference>
<dbReference type="PANTHER" id="PTHR11815">
    <property type="entry name" value="SUCCINYL-COA SYNTHETASE BETA CHAIN"/>
    <property type="match status" value="1"/>
</dbReference>
<dbReference type="Pfam" id="PF08442">
    <property type="entry name" value="ATP-grasp_2"/>
    <property type="match status" value="1"/>
</dbReference>
<dbReference type="Pfam" id="PF00549">
    <property type="entry name" value="Ligase_CoA"/>
    <property type="match status" value="1"/>
</dbReference>
<dbReference type="PIRSF" id="PIRSF001554">
    <property type="entry name" value="SucCS_beta"/>
    <property type="match status" value="1"/>
</dbReference>
<dbReference type="SUPFAM" id="SSF56059">
    <property type="entry name" value="Glutathione synthetase ATP-binding domain-like"/>
    <property type="match status" value="1"/>
</dbReference>
<dbReference type="SUPFAM" id="SSF52210">
    <property type="entry name" value="Succinyl-CoA synthetase domains"/>
    <property type="match status" value="1"/>
</dbReference>
<dbReference type="PROSITE" id="PS50975">
    <property type="entry name" value="ATP_GRASP"/>
    <property type="match status" value="1"/>
</dbReference>
<dbReference type="PROSITE" id="PS01217">
    <property type="entry name" value="SUCCINYL_COA_LIG_3"/>
    <property type="match status" value="1"/>
</dbReference>
<proteinExistence type="inferred from homology"/>
<reference key="1">
    <citation type="journal article" date="2005" name="Nucleic Acids Res.">
        <title>Genomic blueprint of Hahella chejuensis, a marine microbe producing an algicidal agent.</title>
        <authorList>
            <person name="Jeong H."/>
            <person name="Yim J.H."/>
            <person name="Lee C."/>
            <person name="Choi S.-H."/>
            <person name="Park Y.K."/>
            <person name="Yoon S.H."/>
            <person name="Hur C.-G."/>
            <person name="Kang H.-Y."/>
            <person name="Kim D."/>
            <person name="Lee H.H."/>
            <person name="Park K.H."/>
            <person name="Park S.-H."/>
            <person name="Park H.-S."/>
            <person name="Lee H.K."/>
            <person name="Oh T.K."/>
            <person name="Kim J.F."/>
        </authorList>
    </citation>
    <scope>NUCLEOTIDE SEQUENCE [LARGE SCALE GENOMIC DNA]</scope>
    <source>
        <strain>KCTC 2396</strain>
    </source>
</reference>
<comment type="function">
    <text evidence="1">Succinyl-CoA synthetase functions in the citric acid cycle (TCA), coupling the hydrolysis of succinyl-CoA to the synthesis of either ATP or GTP and thus represents the only step of substrate-level phosphorylation in the TCA. The beta subunit provides nucleotide specificity of the enzyme and binds the substrate succinate, while the binding sites for coenzyme A and phosphate are found in the alpha subunit.</text>
</comment>
<comment type="catalytic activity">
    <reaction evidence="1">
        <text>succinate + ATP + CoA = succinyl-CoA + ADP + phosphate</text>
        <dbReference type="Rhea" id="RHEA:17661"/>
        <dbReference type="ChEBI" id="CHEBI:30031"/>
        <dbReference type="ChEBI" id="CHEBI:30616"/>
        <dbReference type="ChEBI" id="CHEBI:43474"/>
        <dbReference type="ChEBI" id="CHEBI:57287"/>
        <dbReference type="ChEBI" id="CHEBI:57292"/>
        <dbReference type="ChEBI" id="CHEBI:456216"/>
        <dbReference type="EC" id="6.2.1.5"/>
    </reaction>
    <physiologicalReaction direction="right-to-left" evidence="1">
        <dbReference type="Rhea" id="RHEA:17663"/>
    </physiologicalReaction>
</comment>
<comment type="catalytic activity">
    <reaction evidence="1">
        <text>GTP + succinate + CoA = succinyl-CoA + GDP + phosphate</text>
        <dbReference type="Rhea" id="RHEA:22120"/>
        <dbReference type="ChEBI" id="CHEBI:30031"/>
        <dbReference type="ChEBI" id="CHEBI:37565"/>
        <dbReference type="ChEBI" id="CHEBI:43474"/>
        <dbReference type="ChEBI" id="CHEBI:57287"/>
        <dbReference type="ChEBI" id="CHEBI:57292"/>
        <dbReference type="ChEBI" id="CHEBI:58189"/>
    </reaction>
    <physiologicalReaction direction="right-to-left" evidence="1">
        <dbReference type="Rhea" id="RHEA:22122"/>
    </physiologicalReaction>
</comment>
<comment type="cofactor">
    <cofactor evidence="1">
        <name>Mg(2+)</name>
        <dbReference type="ChEBI" id="CHEBI:18420"/>
    </cofactor>
    <text evidence="1">Binds 1 Mg(2+) ion per subunit.</text>
</comment>
<comment type="pathway">
    <text evidence="1">Carbohydrate metabolism; tricarboxylic acid cycle; succinate from succinyl-CoA (ligase route): step 1/1.</text>
</comment>
<comment type="subunit">
    <text evidence="1">Heterotetramer of two alpha and two beta subunits.</text>
</comment>
<comment type="similarity">
    <text evidence="1">Belongs to the succinate/malate CoA ligase beta subunit family.</text>
</comment>
<evidence type="ECO:0000255" key="1">
    <source>
        <dbReference type="HAMAP-Rule" id="MF_00558"/>
    </source>
</evidence>
<sequence length="388" mass="41410">MNLHEYQAKQLFADYGLPVSKGFACESAQEAMSAADSIGGSQWVVKAQVHAGGRGKAGGVKLVSSKEEIKAFAEKWLGHNLVTYQTDEKGQPVNKILVESCTDIDQELYLGAVMDRGTRRIVFMASTEGGVEIEKVAEETPEKILKAVIDPLVGAQPYQARELAFALGLNSDQVKQFTKIFLGLAKLFQDLDLALLEVNPLVITKGGNLHCLDAKVVVDGNALYRQPRIRDMHDPSQEDPREAHAAKWELNYVALEGNIGCMVNGAGLAMGTMDIVKLHGGAPANFLDVGGGATKERVTEAFKIILSDDNVKAVLVNIFGGIVRCDLIADGIIGAVEEVGVKIPVVVRLEGNNAELGAKKLADSGLNIIAAESLTHAAEAVVKAAEGK</sequence>
<accession>Q2SD35</accession>
<keyword id="KW-0067">ATP-binding</keyword>
<keyword id="KW-0436">Ligase</keyword>
<keyword id="KW-0460">Magnesium</keyword>
<keyword id="KW-0479">Metal-binding</keyword>
<keyword id="KW-0547">Nucleotide-binding</keyword>
<keyword id="KW-1185">Reference proteome</keyword>
<keyword id="KW-0816">Tricarboxylic acid cycle</keyword>
<feature type="chain" id="PRO_1000082102" description="Succinate--CoA ligase [ADP-forming] subunit beta">
    <location>
        <begin position="1"/>
        <end position="388"/>
    </location>
</feature>
<feature type="domain" description="ATP-grasp" evidence="1">
    <location>
        <begin position="9"/>
        <end position="244"/>
    </location>
</feature>
<feature type="binding site" evidence="1">
    <location>
        <position position="46"/>
    </location>
    <ligand>
        <name>ATP</name>
        <dbReference type="ChEBI" id="CHEBI:30616"/>
    </ligand>
</feature>
<feature type="binding site" evidence="1">
    <location>
        <begin position="53"/>
        <end position="55"/>
    </location>
    <ligand>
        <name>ATP</name>
        <dbReference type="ChEBI" id="CHEBI:30616"/>
    </ligand>
</feature>
<feature type="binding site" evidence="1">
    <location>
        <position position="99"/>
    </location>
    <ligand>
        <name>ATP</name>
        <dbReference type="ChEBI" id="CHEBI:30616"/>
    </ligand>
</feature>
<feature type="binding site" evidence="1">
    <location>
        <position position="102"/>
    </location>
    <ligand>
        <name>ATP</name>
        <dbReference type="ChEBI" id="CHEBI:30616"/>
    </ligand>
</feature>
<feature type="binding site" evidence="1">
    <location>
        <position position="107"/>
    </location>
    <ligand>
        <name>ATP</name>
        <dbReference type="ChEBI" id="CHEBI:30616"/>
    </ligand>
</feature>
<feature type="binding site" evidence="1">
    <location>
        <position position="199"/>
    </location>
    <ligand>
        <name>Mg(2+)</name>
        <dbReference type="ChEBI" id="CHEBI:18420"/>
    </ligand>
</feature>
<feature type="binding site" evidence="1">
    <location>
        <position position="213"/>
    </location>
    <ligand>
        <name>Mg(2+)</name>
        <dbReference type="ChEBI" id="CHEBI:18420"/>
    </ligand>
</feature>
<feature type="binding site" evidence="1">
    <location>
        <position position="264"/>
    </location>
    <ligand>
        <name>substrate</name>
        <note>ligand shared with subunit alpha</note>
    </ligand>
</feature>
<feature type="binding site" evidence="1">
    <location>
        <begin position="321"/>
        <end position="323"/>
    </location>
    <ligand>
        <name>substrate</name>
        <note>ligand shared with subunit alpha</note>
    </ligand>
</feature>
<protein>
    <recommendedName>
        <fullName evidence="1">Succinate--CoA ligase [ADP-forming] subunit beta</fullName>
        <ecNumber evidence="1">6.2.1.5</ecNumber>
    </recommendedName>
    <alternativeName>
        <fullName evidence="1">Succinyl-CoA synthetase subunit beta</fullName>
        <shortName evidence="1">SCS-beta</shortName>
    </alternativeName>
</protein>